<gene>
    <name evidence="1" type="primary">aat</name>
    <name type="ordered locus">BTH_I2509</name>
</gene>
<reference key="1">
    <citation type="journal article" date="2005" name="BMC Genomics">
        <title>Bacterial genome adaptation to niches: divergence of the potential virulence genes in three Burkholderia species of different survival strategies.</title>
        <authorList>
            <person name="Kim H.S."/>
            <person name="Schell M.A."/>
            <person name="Yu Y."/>
            <person name="Ulrich R.L."/>
            <person name="Sarria S.H."/>
            <person name="Nierman W.C."/>
            <person name="DeShazer D."/>
        </authorList>
    </citation>
    <scope>NUCLEOTIDE SEQUENCE [LARGE SCALE GENOMIC DNA]</scope>
    <source>
        <strain>ATCC 700388 / DSM 13276 / CCUG 48851 / CIP 106301 / E264</strain>
    </source>
</reference>
<evidence type="ECO:0000255" key="1">
    <source>
        <dbReference type="HAMAP-Rule" id="MF_00688"/>
    </source>
</evidence>
<protein>
    <recommendedName>
        <fullName evidence="1">Leucyl/phenylalanyl-tRNA--protein transferase</fullName>
        <ecNumber evidence="1">2.3.2.6</ecNumber>
    </recommendedName>
    <alternativeName>
        <fullName evidence="1">L/F-transferase</fullName>
    </alternativeName>
    <alternativeName>
        <fullName evidence="1">Leucyltransferase</fullName>
    </alternativeName>
    <alternativeName>
        <fullName evidence="1">Phenyalanyltransferase</fullName>
    </alternativeName>
</protein>
<accession>Q2SVM1</accession>
<feature type="chain" id="PRO_0000258051" description="Leucyl/phenylalanyl-tRNA--protein transferase">
    <location>
        <begin position="1"/>
        <end position="255"/>
    </location>
</feature>
<proteinExistence type="inferred from homology"/>
<organism>
    <name type="scientific">Burkholderia thailandensis (strain ATCC 700388 / DSM 13276 / CCUG 48851 / CIP 106301 / E264)</name>
    <dbReference type="NCBI Taxonomy" id="271848"/>
    <lineage>
        <taxon>Bacteria</taxon>
        <taxon>Pseudomonadati</taxon>
        <taxon>Pseudomonadota</taxon>
        <taxon>Betaproteobacteria</taxon>
        <taxon>Burkholderiales</taxon>
        <taxon>Burkholderiaceae</taxon>
        <taxon>Burkholderia</taxon>
        <taxon>pseudomallei group</taxon>
    </lineage>
</organism>
<dbReference type="EC" id="2.3.2.6" evidence="1"/>
<dbReference type="EMBL" id="CP000086">
    <property type="protein sequence ID" value="ABC36702.1"/>
    <property type="molecule type" value="Genomic_DNA"/>
</dbReference>
<dbReference type="RefSeq" id="WP_009891392.1">
    <property type="nucleotide sequence ID" value="NZ_CP008785.1"/>
</dbReference>
<dbReference type="SMR" id="Q2SVM1"/>
<dbReference type="GeneID" id="45122219"/>
<dbReference type="KEGG" id="bte:BTH_I2509"/>
<dbReference type="HOGENOM" id="CLU_075045_0_0_4"/>
<dbReference type="Proteomes" id="UP000001930">
    <property type="component" value="Chromosome I"/>
</dbReference>
<dbReference type="GO" id="GO:0005737">
    <property type="term" value="C:cytoplasm"/>
    <property type="evidence" value="ECO:0007669"/>
    <property type="project" value="UniProtKB-SubCell"/>
</dbReference>
<dbReference type="GO" id="GO:0008914">
    <property type="term" value="F:leucyl-tRNA--protein transferase activity"/>
    <property type="evidence" value="ECO:0007669"/>
    <property type="project" value="UniProtKB-UniRule"/>
</dbReference>
<dbReference type="GO" id="GO:0030163">
    <property type="term" value="P:protein catabolic process"/>
    <property type="evidence" value="ECO:0007669"/>
    <property type="project" value="UniProtKB-UniRule"/>
</dbReference>
<dbReference type="Gene3D" id="3.40.630.70">
    <property type="entry name" value="Leucyl/phenylalanyl-tRNA-protein transferase, C-terminal domain"/>
    <property type="match status" value="1"/>
</dbReference>
<dbReference type="Gene3D" id="3.30.70.3550">
    <property type="entry name" value="Leucyl/phenylalanyl-tRNA-protein transferase, N-terminal domain"/>
    <property type="match status" value="1"/>
</dbReference>
<dbReference type="HAMAP" id="MF_00688">
    <property type="entry name" value="Leu_Phe_trans"/>
    <property type="match status" value="1"/>
</dbReference>
<dbReference type="InterPro" id="IPR016181">
    <property type="entry name" value="Acyl_CoA_acyltransferase"/>
</dbReference>
<dbReference type="InterPro" id="IPR004616">
    <property type="entry name" value="Leu/Phe-tRNA_Trfase"/>
</dbReference>
<dbReference type="InterPro" id="IPR042203">
    <property type="entry name" value="Leu/Phe-tRNA_Trfase_C"/>
</dbReference>
<dbReference type="InterPro" id="IPR042221">
    <property type="entry name" value="Leu/Phe-tRNA_Trfase_N"/>
</dbReference>
<dbReference type="NCBIfam" id="TIGR00667">
    <property type="entry name" value="aat"/>
    <property type="match status" value="1"/>
</dbReference>
<dbReference type="PANTHER" id="PTHR30098">
    <property type="entry name" value="LEUCYL/PHENYLALANYL-TRNA--PROTEIN TRANSFERASE"/>
    <property type="match status" value="1"/>
</dbReference>
<dbReference type="PANTHER" id="PTHR30098:SF2">
    <property type="entry name" value="LEUCYL_PHENYLALANYL-TRNA--PROTEIN TRANSFERASE"/>
    <property type="match status" value="1"/>
</dbReference>
<dbReference type="Pfam" id="PF03588">
    <property type="entry name" value="Leu_Phe_trans"/>
    <property type="match status" value="1"/>
</dbReference>
<dbReference type="SUPFAM" id="SSF55729">
    <property type="entry name" value="Acyl-CoA N-acyltransferases (Nat)"/>
    <property type="match status" value="1"/>
</dbReference>
<keyword id="KW-0012">Acyltransferase</keyword>
<keyword id="KW-0963">Cytoplasm</keyword>
<keyword id="KW-0808">Transferase</keyword>
<sequence length="255" mass="27987">MVPWLGPDDPFPSVERALGAASGAPGLLAASADLLPSRLIDAYRRGIFPWYSDGQPVLWWSPDPRMILVPAEFRISATFRKTLKRVLREPRWEIRVDCDFAGVMRACAQAPRRGQRGTWITAEIIDAYSSLHRAGDAHSIETWLDGRRVGGLYGVSFGGMFFGESMYADVSDASKIALAALVAHLREHRVVMIDCQQNTSHLASLGGREIARKAFVAHVRRAVAEPPISWRFDKTVVAGLLGQAASATAADAFDR</sequence>
<name>LFTR_BURTA</name>
<comment type="function">
    <text evidence="1">Functions in the N-end rule pathway of protein degradation where it conjugates Leu, Phe and, less efficiently, Met from aminoacyl-tRNAs to the N-termini of proteins containing an N-terminal arginine or lysine.</text>
</comment>
<comment type="catalytic activity">
    <reaction evidence="1">
        <text>N-terminal L-lysyl-[protein] + L-leucyl-tRNA(Leu) = N-terminal L-leucyl-L-lysyl-[protein] + tRNA(Leu) + H(+)</text>
        <dbReference type="Rhea" id="RHEA:12340"/>
        <dbReference type="Rhea" id="RHEA-COMP:9613"/>
        <dbReference type="Rhea" id="RHEA-COMP:9622"/>
        <dbReference type="Rhea" id="RHEA-COMP:12670"/>
        <dbReference type="Rhea" id="RHEA-COMP:12671"/>
        <dbReference type="ChEBI" id="CHEBI:15378"/>
        <dbReference type="ChEBI" id="CHEBI:65249"/>
        <dbReference type="ChEBI" id="CHEBI:78442"/>
        <dbReference type="ChEBI" id="CHEBI:78494"/>
        <dbReference type="ChEBI" id="CHEBI:133043"/>
        <dbReference type="EC" id="2.3.2.6"/>
    </reaction>
</comment>
<comment type="catalytic activity">
    <reaction evidence="1">
        <text>N-terminal L-arginyl-[protein] + L-leucyl-tRNA(Leu) = N-terminal L-leucyl-L-arginyl-[protein] + tRNA(Leu) + H(+)</text>
        <dbReference type="Rhea" id="RHEA:50416"/>
        <dbReference type="Rhea" id="RHEA-COMP:9613"/>
        <dbReference type="Rhea" id="RHEA-COMP:9622"/>
        <dbReference type="Rhea" id="RHEA-COMP:12672"/>
        <dbReference type="Rhea" id="RHEA-COMP:12673"/>
        <dbReference type="ChEBI" id="CHEBI:15378"/>
        <dbReference type="ChEBI" id="CHEBI:64719"/>
        <dbReference type="ChEBI" id="CHEBI:78442"/>
        <dbReference type="ChEBI" id="CHEBI:78494"/>
        <dbReference type="ChEBI" id="CHEBI:133044"/>
        <dbReference type="EC" id="2.3.2.6"/>
    </reaction>
</comment>
<comment type="catalytic activity">
    <reaction evidence="1">
        <text>L-phenylalanyl-tRNA(Phe) + an N-terminal L-alpha-aminoacyl-[protein] = an N-terminal L-phenylalanyl-L-alpha-aminoacyl-[protein] + tRNA(Phe)</text>
        <dbReference type="Rhea" id="RHEA:43632"/>
        <dbReference type="Rhea" id="RHEA-COMP:9668"/>
        <dbReference type="Rhea" id="RHEA-COMP:9699"/>
        <dbReference type="Rhea" id="RHEA-COMP:10636"/>
        <dbReference type="Rhea" id="RHEA-COMP:10637"/>
        <dbReference type="ChEBI" id="CHEBI:78442"/>
        <dbReference type="ChEBI" id="CHEBI:78531"/>
        <dbReference type="ChEBI" id="CHEBI:78597"/>
        <dbReference type="ChEBI" id="CHEBI:83561"/>
        <dbReference type="EC" id="2.3.2.6"/>
    </reaction>
</comment>
<comment type="subcellular location">
    <subcellularLocation>
        <location evidence="1">Cytoplasm</location>
    </subcellularLocation>
</comment>
<comment type="similarity">
    <text evidence="1">Belongs to the L/F-transferase family.</text>
</comment>